<protein>
    <recommendedName>
        <fullName>CASP-like protein 5B1</fullName>
        <shortName>GbCASPL5B1</shortName>
    </recommendedName>
</protein>
<sequence length="178" mass="19399">MDASNPIVHPIGDHHAVDLEEGPLIVTMKELPGMPGTIGGLALRVGQFLFAAAAIVIMVTGDEFTNYTAFCYLVAAMSLQFLWSFMLAILDTYALLIKRGLRNSVLLSLFVVGDWVTATLSLAAACSTAGVTVLFDNDLNYCGQMHCHRYQLSAAMAFLSWLLIGMSSLLTFWLWASE</sequence>
<name>CSPL3_GINBI</name>
<dbReference type="GO" id="GO:0005886">
    <property type="term" value="C:plasma membrane"/>
    <property type="evidence" value="ECO:0007669"/>
    <property type="project" value="UniProtKB-SubCell"/>
</dbReference>
<dbReference type="InterPro" id="IPR006702">
    <property type="entry name" value="CASP_dom"/>
</dbReference>
<dbReference type="InterPro" id="IPR045009">
    <property type="entry name" value="CASPL-5"/>
</dbReference>
<dbReference type="PANTHER" id="PTHR32021:SF1">
    <property type="entry name" value="CASP-LIKE PROTEIN 5A1"/>
    <property type="match status" value="1"/>
</dbReference>
<dbReference type="PANTHER" id="PTHR32021">
    <property type="entry name" value="CASP-LIKE PROTEIN 5B3"/>
    <property type="match status" value="1"/>
</dbReference>
<dbReference type="Pfam" id="PF04535">
    <property type="entry name" value="CASP_dom"/>
    <property type="match status" value="1"/>
</dbReference>
<feature type="chain" id="PRO_0000418709" description="CASP-like protein 5B1">
    <location>
        <begin position="1"/>
        <end position="178"/>
    </location>
</feature>
<feature type="topological domain" description="Cytoplasmic" evidence="2">
    <location>
        <begin position="1"/>
        <end position="37"/>
    </location>
</feature>
<feature type="transmembrane region" description="Helical" evidence="2">
    <location>
        <begin position="38"/>
        <end position="58"/>
    </location>
</feature>
<feature type="topological domain" description="Extracellular" evidence="2">
    <location>
        <begin position="59"/>
        <end position="69"/>
    </location>
</feature>
<feature type="transmembrane region" description="Helical" evidence="2">
    <location>
        <begin position="70"/>
        <end position="90"/>
    </location>
</feature>
<feature type="topological domain" description="Cytoplasmic" evidence="2">
    <location>
        <begin position="91"/>
        <end position="104"/>
    </location>
</feature>
<feature type="transmembrane region" description="Helical" evidence="2">
    <location>
        <begin position="105"/>
        <end position="125"/>
    </location>
</feature>
<feature type="topological domain" description="Extracellular" evidence="2">
    <location>
        <begin position="126"/>
        <end position="154"/>
    </location>
</feature>
<feature type="transmembrane region" description="Helical" evidence="2">
    <location>
        <begin position="155"/>
        <end position="175"/>
    </location>
</feature>
<feature type="topological domain" description="Cytoplasmic" evidence="2">
    <location>
        <begin position="176"/>
        <end position="178"/>
    </location>
</feature>
<feature type="glycosylation site" description="N-linked (GlcNAc...) asparagine" evidence="2">
    <location>
        <position position="66"/>
    </location>
</feature>
<proteinExistence type="inferred from homology"/>
<organism>
    <name type="scientific">Ginkgo biloba</name>
    <name type="common">Ginkgo</name>
    <name type="synonym">Maidenhair tree</name>
    <dbReference type="NCBI Taxonomy" id="3311"/>
    <lineage>
        <taxon>Eukaryota</taxon>
        <taxon>Viridiplantae</taxon>
        <taxon>Streptophyta</taxon>
        <taxon>Embryophyta</taxon>
        <taxon>Tracheophyta</taxon>
        <taxon>Spermatophyta</taxon>
        <taxon>Ginkgoidae</taxon>
        <taxon>Ginkgoales</taxon>
        <taxon>Ginkgoaceae</taxon>
        <taxon>Ginkgo</taxon>
    </lineage>
</organism>
<accession>P0DI71</accession>
<keyword id="KW-1003">Cell membrane</keyword>
<keyword id="KW-0325">Glycoprotein</keyword>
<keyword id="KW-0472">Membrane</keyword>
<keyword id="KW-0812">Transmembrane</keyword>
<keyword id="KW-1133">Transmembrane helix</keyword>
<gene>
    <name type="ORF">gba_locus_13664</name>
</gene>
<comment type="subunit">
    <text evidence="1">Homodimer and heterodimers.</text>
</comment>
<comment type="subcellular location">
    <subcellularLocation>
        <location evidence="1">Cell membrane</location>
        <topology evidence="1">Multi-pass membrane protein</topology>
    </subcellularLocation>
</comment>
<comment type="similarity">
    <text evidence="3">Belongs to the Casparian strip membrane proteins (CASP) family.</text>
</comment>
<reference key="1">
    <citation type="journal article" date="2005" name="Plant Physiol.">
        <title>Comparative plant genomics resources at PlantGDB.</title>
        <authorList>
            <person name="Dong Q."/>
            <person name="Lawrence C.J."/>
            <person name="Schlueter S.D."/>
            <person name="Wilkerson M.D."/>
            <person name="Kurtz S."/>
            <person name="Lushbough C."/>
            <person name="Brendel V."/>
        </authorList>
    </citation>
    <scope>NUCLEOTIDE SEQUENCE [LARGE SCALE MRNA]</scope>
</reference>
<reference key="2">
    <citation type="journal article" date="2014" name="Plant Physiol.">
        <title>Functional and evolutionary analysis of the CASPARIAN STRIP MEMBRANE DOMAIN PROTEIN family.</title>
        <authorList>
            <person name="Roppolo D."/>
            <person name="Boeckmann B."/>
            <person name="Pfister A."/>
            <person name="Boutet E."/>
            <person name="Rubio M.C."/>
            <person name="Denervaud-Tendon V."/>
            <person name="Vermeer J.E."/>
            <person name="Gheyselinck J."/>
            <person name="Xenarios I."/>
            <person name="Geldner N."/>
        </authorList>
    </citation>
    <scope>GENE FAMILY</scope>
    <scope>NOMENCLATURE</scope>
</reference>
<evidence type="ECO:0000250" key="1"/>
<evidence type="ECO:0000255" key="2"/>
<evidence type="ECO:0000305" key="3"/>